<proteinExistence type="inferred from homology"/>
<reference key="1">
    <citation type="submission" date="1997-03" db="EMBL/GenBank/DDBJ databases">
        <authorList>
            <person name="Ueda M."/>
            <person name="Sanuki S."/>
            <person name="Kawachi H."/>
            <person name="Shimizu K."/>
            <person name="Atomi H."/>
            <person name="Tanaka A."/>
        </authorList>
    </citation>
    <scope>NUCLEOTIDE SEQUENCE [GENOMIC DNA]</scope>
    <source>
        <strain>ATCC 20336 / pK233 / NCYC 997</strain>
    </source>
</reference>
<evidence type="ECO:0000255" key="1"/>
<evidence type="ECO:0000255" key="2">
    <source>
        <dbReference type="PROSITE-ProRule" id="PRU10117"/>
    </source>
</evidence>
<evidence type="ECO:0000305" key="3"/>
<organism>
    <name type="scientific">Candida tropicalis</name>
    <name type="common">Yeast</name>
    <dbReference type="NCBI Taxonomy" id="5482"/>
    <lineage>
        <taxon>Eukaryota</taxon>
        <taxon>Fungi</taxon>
        <taxon>Dikarya</taxon>
        <taxon>Ascomycota</taxon>
        <taxon>Saccharomycotina</taxon>
        <taxon>Pichiomycetes</taxon>
        <taxon>Debaryomycetaceae</taxon>
        <taxon>Candida/Lodderomyces clade</taxon>
        <taxon>Candida</taxon>
    </lineage>
</organism>
<comment type="catalytic activity">
    <reaction evidence="2">
        <text>oxaloacetate + acetyl-CoA + H2O = citrate + CoA + H(+)</text>
        <dbReference type="Rhea" id="RHEA:16845"/>
        <dbReference type="ChEBI" id="CHEBI:15377"/>
        <dbReference type="ChEBI" id="CHEBI:15378"/>
        <dbReference type="ChEBI" id="CHEBI:16452"/>
        <dbReference type="ChEBI" id="CHEBI:16947"/>
        <dbReference type="ChEBI" id="CHEBI:57287"/>
        <dbReference type="ChEBI" id="CHEBI:57288"/>
        <dbReference type="EC" id="2.3.3.16"/>
    </reaction>
</comment>
<comment type="pathway">
    <text>Carbohydrate metabolism; tricarboxylic acid cycle; isocitrate from oxaloacetate: step 1/2.</text>
</comment>
<comment type="subcellular location">
    <subcellularLocation>
        <location>Mitochondrion matrix</location>
    </subcellularLocation>
</comment>
<comment type="miscellaneous">
    <text>Citrate synthase is found in nearly all cells capable of oxidative metabolism.</text>
</comment>
<comment type="similarity">
    <text evidence="3">Belongs to the citrate synthase family.</text>
</comment>
<comment type="caution">
    <text evidence="3">The conserved active site Asp residue in position 402 is replaced by a Gly.</text>
</comment>
<feature type="transit peptide" description="Mitochondrion" evidence="1">
    <location>
        <begin position="1"/>
        <end status="unknown"/>
    </location>
</feature>
<feature type="chain" id="PRO_0000005476" description="Citrate synthase, mitochondrial">
    <location>
        <begin status="unknown"/>
        <end position="467"/>
    </location>
</feature>
<feature type="active site" evidence="2">
    <location>
        <position position="301"/>
    </location>
</feature>
<feature type="active site" evidence="2">
    <location>
        <position position="347"/>
    </location>
</feature>
<accession>P79024</accession>
<sequence>MSALRSFQRSSNVAKSTLKNSVRTYATAEPTLKQRLEEILPAKAEEVKQLKKDYGKTVIGEVLLEQAYGGMRGIKGLVWEGSVLDPIEGIRFRGRTIPDIQKELPKAPGGEEPLPEALFWLLLTGEVPTEAQTRALSEEFAARSALPKHVEELIDRSPSHLHPMAQFSIAVTALESESQFAKAYAKGVHKSEYWKYTYEDSIELLAKLPTIAAKIYRNVFHDGKLPAQIDSKLDYGANLASLLGFGENKEFLELMRLYLTIHSDHEGGNVSAHTTHLVGSALSSPFLSLAAGLNGLAGPLHGRANQEVLEWLFKLREELNGDYSKEAIEKYLWDTLNAGRVGPGYGHAVLRKTDPRYTAQREFALKHMPDYELFKLVSNIYEVAPGVFDQHGMTKNPWPNVGSHSGVLLQYYGLTEESFYTVLFGVSRAFGVLPQLILDRGLGMPIERPKSFSTEKYIELVKSIGKN</sequence>
<gene>
    <name type="primary">CIT</name>
</gene>
<dbReference type="EC" id="2.3.3.16"/>
<dbReference type="EMBL" id="AB001565">
    <property type="protein sequence ID" value="BAA19410.1"/>
    <property type="molecule type" value="Genomic_DNA"/>
</dbReference>
<dbReference type="SMR" id="P79024"/>
<dbReference type="VEuPathDB" id="FungiDB:CTMYA2_039600"/>
<dbReference type="VEuPathDB" id="FungiDB:CTRG_00747"/>
<dbReference type="UniPathway" id="UPA00223">
    <property type="reaction ID" value="UER00717"/>
</dbReference>
<dbReference type="GO" id="GO:0005759">
    <property type="term" value="C:mitochondrial matrix"/>
    <property type="evidence" value="ECO:0007669"/>
    <property type="project" value="UniProtKB-SubCell"/>
</dbReference>
<dbReference type="GO" id="GO:0004108">
    <property type="term" value="F:citrate (Si)-synthase activity"/>
    <property type="evidence" value="ECO:0007669"/>
    <property type="project" value="EnsemblFungi"/>
</dbReference>
<dbReference type="GO" id="GO:0005975">
    <property type="term" value="P:carbohydrate metabolic process"/>
    <property type="evidence" value="ECO:0007669"/>
    <property type="project" value="TreeGrafter"/>
</dbReference>
<dbReference type="GO" id="GO:0006101">
    <property type="term" value="P:citrate metabolic process"/>
    <property type="evidence" value="ECO:0007669"/>
    <property type="project" value="EnsemblFungi"/>
</dbReference>
<dbReference type="GO" id="GO:0006099">
    <property type="term" value="P:tricarboxylic acid cycle"/>
    <property type="evidence" value="ECO:0007669"/>
    <property type="project" value="UniProtKB-UniPathway"/>
</dbReference>
<dbReference type="FunFam" id="1.10.230.10:FF:000001">
    <property type="entry name" value="Citrate synthase"/>
    <property type="match status" value="1"/>
</dbReference>
<dbReference type="FunFam" id="1.10.580.10:FF:000001">
    <property type="entry name" value="Citrate synthase"/>
    <property type="match status" value="1"/>
</dbReference>
<dbReference type="Gene3D" id="1.10.580.10">
    <property type="entry name" value="Citrate Synthase, domain 1"/>
    <property type="match status" value="1"/>
</dbReference>
<dbReference type="Gene3D" id="1.10.230.10">
    <property type="entry name" value="Cytochrome P450-Terp, domain 2"/>
    <property type="match status" value="1"/>
</dbReference>
<dbReference type="InterPro" id="IPR016142">
    <property type="entry name" value="Citrate_synth-like_lrg_a-sub"/>
</dbReference>
<dbReference type="InterPro" id="IPR016143">
    <property type="entry name" value="Citrate_synth-like_sm_a-sub"/>
</dbReference>
<dbReference type="InterPro" id="IPR002020">
    <property type="entry name" value="Citrate_synthase"/>
</dbReference>
<dbReference type="InterPro" id="IPR019810">
    <property type="entry name" value="Citrate_synthase_AS"/>
</dbReference>
<dbReference type="InterPro" id="IPR010109">
    <property type="entry name" value="Citrate_synthase_euk"/>
</dbReference>
<dbReference type="InterPro" id="IPR036969">
    <property type="entry name" value="Citrate_synthase_sf"/>
</dbReference>
<dbReference type="NCBIfam" id="TIGR01793">
    <property type="entry name" value="cit_synth_euk"/>
    <property type="match status" value="1"/>
</dbReference>
<dbReference type="NCBIfam" id="NF007128">
    <property type="entry name" value="PRK09569.1"/>
    <property type="match status" value="1"/>
</dbReference>
<dbReference type="PANTHER" id="PTHR11739">
    <property type="entry name" value="CITRATE SYNTHASE"/>
    <property type="match status" value="1"/>
</dbReference>
<dbReference type="PANTHER" id="PTHR11739:SF8">
    <property type="entry name" value="CITRATE SYNTHASE, MITOCHONDRIAL"/>
    <property type="match status" value="1"/>
</dbReference>
<dbReference type="Pfam" id="PF00285">
    <property type="entry name" value="Citrate_synt"/>
    <property type="match status" value="1"/>
</dbReference>
<dbReference type="PRINTS" id="PR00143">
    <property type="entry name" value="CITRTSNTHASE"/>
</dbReference>
<dbReference type="SUPFAM" id="SSF48256">
    <property type="entry name" value="Citrate synthase"/>
    <property type="match status" value="1"/>
</dbReference>
<dbReference type="PROSITE" id="PS00480">
    <property type="entry name" value="CITRATE_SYNTHASE"/>
    <property type="match status" value="1"/>
</dbReference>
<protein>
    <recommendedName>
        <fullName>Citrate synthase, mitochondrial</fullName>
        <ecNumber>2.3.3.16</ecNumber>
    </recommendedName>
</protein>
<name>CISY_CANTR</name>
<keyword id="KW-0496">Mitochondrion</keyword>
<keyword id="KW-0808">Transferase</keyword>
<keyword id="KW-0809">Transit peptide</keyword>
<keyword id="KW-0816">Tricarboxylic acid cycle</keyword>